<accession>A5CW13</accession>
<organism>
    <name type="scientific">Vesicomyosocius okutanii subsp. Calyptogena okutanii (strain HA)</name>
    <dbReference type="NCBI Taxonomy" id="412965"/>
    <lineage>
        <taxon>Bacteria</taxon>
        <taxon>Pseudomonadati</taxon>
        <taxon>Pseudomonadota</taxon>
        <taxon>Gammaproteobacteria</taxon>
        <taxon>Candidatus Pseudothioglobaceae</taxon>
        <taxon>Candidatus Vesicomyosocius</taxon>
    </lineage>
</organism>
<protein>
    <recommendedName>
        <fullName evidence="1">2-dehydro-3-deoxyphosphooctonate aldolase</fullName>
        <ecNumber evidence="1">2.5.1.55</ecNumber>
    </recommendedName>
    <alternativeName>
        <fullName evidence="1">3-deoxy-D-manno-octulosonic acid 8-phosphate synthase</fullName>
    </alternativeName>
    <alternativeName>
        <fullName evidence="1">KDO-8-phosphate synthase</fullName>
        <shortName evidence="1">KDO 8-P synthase</shortName>
        <shortName evidence="1">KDOPS</shortName>
    </alternativeName>
    <alternativeName>
        <fullName evidence="1">Phospho-2-dehydro-3-deoxyoctonate aldolase</fullName>
    </alternativeName>
</protein>
<comment type="catalytic activity">
    <reaction evidence="1">
        <text>D-arabinose 5-phosphate + phosphoenolpyruvate + H2O = 3-deoxy-alpha-D-manno-2-octulosonate-8-phosphate + phosphate</text>
        <dbReference type="Rhea" id="RHEA:14053"/>
        <dbReference type="ChEBI" id="CHEBI:15377"/>
        <dbReference type="ChEBI" id="CHEBI:43474"/>
        <dbReference type="ChEBI" id="CHEBI:57693"/>
        <dbReference type="ChEBI" id="CHEBI:58702"/>
        <dbReference type="ChEBI" id="CHEBI:85985"/>
        <dbReference type="EC" id="2.5.1.55"/>
    </reaction>
</comment>
<comment type="pathway">
    <text evidence="1">Carbohydrate biosynthesis; 3-deoxy-D-manno-octulosonate biosynthesis; 3-deoxy-D-manno-octulosonate from D-ribulose 5-phosphate: step 2/3.</text>
</comment>
<comment type="pathway">
    <text evidence="1">Bacterial outer membrane biogenesis; lipopolysaccharide biosynthesis.</text>
</comment>
<comment type="subcellular location">
    <subcellularLocation>
        <location evidence="1">Cytoplasm</location>
    </subcellularLocation>
</comment>
<comment type="similarity">
    <text evidence="1">Belongs to the KdsA family.</text>
</comment>
<gene>
    <name evidence="1" type="primary">kdsA</name>
    <name type="ordered locus">COSY_0755</name>
</gene>
<reference key="1">
    <citation type="journal article" date="2007" name="Curr. Biol.">
        <title>Reduced genome of the thioautotrophic intracellular symbiont in a deep-sea clam, Calyptogena okutanii.</title>
        <authorList>
            <person name="Kuwahara H."/>
            <person name="Yoshida T."/>
            <person name="Takaki Y."/>
            <person name="Shimamura S."/>
            <person name="Nishi S."/>
            <person name="Harada M."/>
            <person name="Matsuyama K."/>
            <person name="Takishita K."/>
            <person name="Kawato M."/>
            <person name="Uematsu K."/>
            <person name="Fujiwara Y."/>
            <person name="Sato T."/>
            <person name="Kato C."/>
            <person name="Kitagawa M."/>
            <person name="Kato I."/>
            <person name="Maruyama T."/>
        </authorList>
    </citation>
    <scope>NUCLEOTIDE SEQUENCE [LARGE SCALE GENOMIC DNA]</scope>
    <source>
        <strain>HA</strain>
    </source>
</reference>
<feature type="chain" id="PRO_1000117791" description="2-dehydro-3-deoxyphosphooctonate aldolase">
    <location>
        <begin position="1"/>
        <end position="277"/>
    </location>
</feature>
<sequence>MKLLDFEVGINHPFFLIAGPCVIESEALALETATYLKRVTEDLGINFIYKSSYDKANRTSTNSFRGLGVKEGLRILQKVKDEVGVPVLTDVHEDTPLSEVASVVDMMQTPAFLVRQTNFIQNVCKQGIPVNIKKGQFQAPWDIGNVVNKAYETGNRLITICERGTSFGYNTLISDMRGLSTMRSTGCPIVFDATHSVQQPGGNGLTSGGQREMVPVVARAAIGVGVSGFFMETHPNPNEAFSDGPNMVPIDKIDELLKTLQELDAVTKKHGFLEDSL</sequence>
<dbReference type="EC" id="2.5.1.55" evidence="1"/>
<dbReference type="EMBL" id="AP009247">
    <property type="protein sequence ID" value="BAF61863.1"/>
    <property type="molecule type" value="Genomic_DNA"/>
</dbReference>
<dbReference type="RefSeq" id="WP_011930132.1">
    <property type="nucleotide sequence ID" value="NC_009465.1"/>
</dbReference>
<dbReference type="SMR" id="A5CW13"/>
<dbReference type="STRING" id="412965.COSY_0755"/>
<dbReference type="KEGG" id="vok:COSY_0755"/>
<dbReference type="eggNOG" id="COG2877">
    <property type="taxonomic scope" value="Bacteria"/>
</dbReference>
<dbReference type="HOGENOM" id="CLU_036666_0_0_6"/>
<dbReference type="OrthoDB" id="9776934at2"/>
<dbReference type="UniPathway" id="UPA00030"/>
<dbReference type="UniPathway" id="UPA00357">
    <property type="reaction ID" value="UER00474"/>
</dbReference>
<dbReference type="Proteomes" id="UP000000247">
    <property type="component" value="Chromosome"/>
</dbReference>
<dbReference type="GO" id="GO:0005737">
    <property type="term" value="C:cytoplasm"/>
    <property type="evidence" value="ECO:0007669"/>
    <property type="project" value="UniProtKB-SubCell"/>
</dbReference>
<dbReference type="GO" id="GO:0008676">
    <property type="term" value="F:3-deoxy-8-phosphooctulonate synthase activity"/>
    <property type="evidence" value="ECO:0007669"/>
    <property type="project" value="UniProtKB-UniRule"/>
</dbReference>
<dbReference type="GO" id="GO:0019294">
    <property type="term" value="P:keto-3-deoxy-D-manno-octulosonic acid biosynthetic process"/>
    <property type="evidence" value="ECO:0007669"/>
    <property type="project" value="UniProtKB-UniRule"/>
</dbReference>
<dbReference type="Gene3D" id="3.20.20.70">
    <property type="entry name" value="Aldolase class I"/>
    <property type="match status" value="1"/>
</dbReference>
<dbReference type="HAMAP" id="MF_00056">
    <property type="entry name" value="KDO8P_synth"/>
    <property type="match status" value="1"/>
</dbReference>
<dbReference type="InterPro" id="IPR013785">
    <property type="entry name" value="Aldolase_TIM"/>
</dbReference>
<dbReference type="InterPro" id="IPR006218">
    <property type="entry name" value="DAHP1/KDSA"/>
</dbReference>
<dbReference type="InterPro" id="IPR006269">
    <property type="entry name" value="KDO8P_synthase"/>
</dbReference>
<dbReference type="NCBIfam" id="TIGR01362">
    <property type="entry name" value="KDO8P_synth"/>
    <property type="match status" value="1"/>
</dbReference>
<dbReference type="NCBIfam" id="NF003543">
    <property type="entry name" value="PRK05198.1"/>
    <property type="match status" value="1"/>
</dbReference>
<dbReference type="PANTHER" id="PTHR21057">
    <property type="entry name" value="PHOSPHO-2-DEHYDRO-3-DEOXYHEPTONATE ALDOLASE"/>
    <property type="match status" value="1"/>
</dbReference>
<dbReference type="Pfam" id="PF00793">
    <property type="entry name" value="DAHP_synth_1"/>
    <property type="match status" value="1"/>
</dbReference>
<dbReference type="SUPFAM" id="SSF51569">
    <property type="entry name" value="Aldolase"/>
    <property type="match status" value="1"/>
</dbReference>
<name>KDSA_VESOH</name>
<evidence type="ECO:0000255" key="1">
    <source>
        <dbReference type="HAMAP-Rule" id="MF_00056"/>
    </source>
</evidence>
<keyword id="KW-0963">Cytoplasm</keyword>
<keyword id="KW-0448">Lipopolysaccharide biosynthesis</keyword>
<keyword id="KW-1185">Reference proteome</keyword>
<keyword id="KW-0808">Transferase</keyword>
<proteinExistence type="inferred from homology"/>